<keyword id="KW-1015">Disulfide bond</keyword>
<keyword id="KW-0496">Mitochondrion</keyword>
<keyword id="KW-1185">Reference proteome</keyword>
<keyword id="KW-0809">Transit peptide</keyword>
<proteinExistence type="inferred from homology"/>
<gene>
    <name type="primary">COX23</name>
    <name type="ORF">FGRRES_15025</name>
    <name type="ORF">FGSG_05766</name>
    <name type="ORF">FGSG_15025</name>
</gene>
<feature type="transit peptide" description="Mitochondrion" evidence="3">
    <location>
        <begin position="1"/>
        <end status="unknown"/>
    </location>
</feature>
<feature type="chain" id="PRO_0000280663" description="Cytochrome c oxidase-assembly factor COX23, mitochondrial">
    <location>
        <begin status="unknown"/>
        <end position="93"/>
    </location>
</feature>
<feature type="domain" description="CHCH" evidence="4">
    <location>
        <begin position="43"/>
        <end position="85"/>
    </location>
</feature>
<feature type="region of interest" description="Disordered" evidence="5">
    <location>
        <begin position="1"/>
        <end position="40"/>
    </location>
</feature>
<feature type="short sequence motif" description="Cx9C motif 1" evidence="4">
    <location>
        <begin position="46"/>
        <end position="56"/>
    </location>
</feature>
<feature type="short sequence motif" description="Cx9C motif 2" evidence="4">
    <location>
        <begin position="67"/>
        <end position="77"/>
    </location>
</feature>
<feature type="compositionally biased region" description="Basic and acidic residues" evidence="5">
    <location>
        <begin position="8"/>
        <end position="40"/>
    </location>
</feature>
<feature type="disulfide bond" evidence="4">
    <location>
        <begin position="46"/>
        <end position="77"/>
    </location>
</feature>
<feature type="disulfide bond" evidence="4">
    <location>
        <begin position="56"/>
        <end position="67"/>
    </location>
</feature>
<sequence>MSSSTPKDTVDTAETPKVKDPESQAWSDDKRRKFETKSKSEFYDPCQEAAQASYRCLFRNGGDKNMCGEYFQAYRDCKQEWTEKRRREGRGWF</sequence>
<organism>
    <name type="scientific">Gibberella zeae (strain ATCC MYA-4620 / CBS 123657 / FGSC 9075 / NRRL 31084 / PH-1)</name>
    <name type="common">Wheat head blight fungus</name>
    <name type="synonym">Fusarium graminearum</name>
    <dbReference type="NCBI Taxonomy" id="229533"/>
    <lineage>
        <taxon>Eukaryota</taxon>
        <taxon>Fungi</taxon>
        <taxon>Dikarya</taxon>
        <taxon>Ascomycota</taxon>
        <taxon>Pezizomycotina</taxon>
        <taxon>Sordariomycetes</taxon>
        <taxon>Hypocreomycetidae</taxon>
        <taxon>Hypocreales</taxon>
        <taxon>Nectriaceae</taxon>
        <taxon>Fusarium</taxon>
    </lineage>
</organism>
<evidence type="ECO:0000250" key="1"/>
<evidence type="ECO:0000250" key="2">
    <source>
        <dbReference type="UniProtKB" id="P38824"/>
    </source>
</evidence>
<evidence type="ECO:0000255" key="3"/>
<evidence type="ECO:0000255" key="4">
    <source>
        <dbReference type="PROSITE-ProRule" id="PRU01150"/>
    </source>
</evidence>
<evidence type="ECO:0000256" key="5">
    <source>
        <dbReference type="SAM" id="MobiDB-lite"/>
    </source>
</evidence>
<evidence type="ECO:0000305" key="6"/>
<protein>
    <recommendedName>
        <fullName>Cytochrome c oxidase-assembly factor COX23, mitochondrial</fullName>
    </recommendedName>
</protein>
<name>COX23_GIBZE</name>
<reference key="1">
    <citation type="journal article" date="2007" name="Science">
        <title>The Fusarium graminearum genome reveals a link between localized polymorphism and pathogen specialization.</title>
        <authorList>
            <person name="Cuomo C.A."/>
            <person name="Gueldener U."/>
            <person name="Xu J.-R."/>
            <person name="Trail F."/>
            <person name="Turgeon B.G."/>
            <person name="Di Pietro A."/>
            <person name="Walton J.D."/>
            <person name="Ma L.-J."/>
            <person name="Baker S.E."/>
            <person name="Rep M."/>
            <person name="Adam G."/>
            <person name="Antoniw J."/>
            <person name="Baldwin T."/>
            <person name="Calvo S.E."/>
            <person name="Chang Y.-L."/>
            <person name="DeCaprio D."/>
            <person name="Gale L.R."/>
            <person name="Gnerre S."/>
            <person name="Goswami R.S."/>
            <person name="Hammond-Kosack K."/>
            <person name="Harris L.J."/>
            <person name="Hilburn K."/>
            <person name="Kennell J.C."/>
            <person name="Kroken S."/>
            <person name="Magnuson J.K."/>
            <person name="Mannhaupt G."/>
            <person name="Mauceli E.W."/>
            <person name="Mewes H.-W."/>
            <person name="Mitterbauer R."/>
            <person name="Muehlbauer G."/>
            <person name="Muensterkoetter M."/>
            <person name="Nelson D."/>
            <person name="O'Donnell K."/>
            <person name="Ouellet T."/>
            <person name="Qi W."/>
            <person name="Quesneville H."/>
            <person name="Roncero M.I.G."/>
            <person name="Seong K.-Y."/>
            <person name="Tetko I.V."/>
            <person name="Urban M."/>
            <person name="Waalwijk C."/>
            <person name="Ward T.J."/>
            <person name="Yao J."/>
            <person name="Birren B.W."/>
            <person name="Kistler H.C."/>
        </authorList>
    </citation>
    <scope>NUCLEOTIDE SEQUENCE [LARGE SCALE GENOMIC DNA]</scope>
    <source>
        <strain>ATCC MYA-4620 / CBS 123657 / FGSC 9075 / NRRL 31084 / PH-1</strain>
    </source>
</reference>
<reference key="2">
    <citation type="journal article" date="2010" name="Nature">
        <title>Comparative genomics reveals mobile pathogenicity chromosomes in Fusarium.</title>
        <authorList>
            <person name="Ma L.-J."/>
            <person name="van der Does H.C."/>
            <person name="Borkovich K.A."/>
            <person name="Coleman J.J."/>
            <person name="Daboussi M.-J."/>
            <person name="Di Pietro A."/>
            <person name="Dufresne M."/>
            <person name="Freitag M."/>
            <person name="Grabherr M."/>
            <person name="Henrissat B."/>
            <person name="Houterman P.M."/>
            <person name="Kang S."/>
            <person name="Shim W.-B."/>
            <person name="Woloshuk C."/>
            <person name="Xie X."/>
            <person name="Xu J.-R."/>
            <person name="Antoniw J."/>
            <person name="Baker S.E."/>
            <person name="Bluhm B.H."/>
            <person name="Breakspear A."/>
            <person name="Brown D.W."/>
            <person name="Butchko R.A.E."/>
            <person name="Chapman S."/>
            <person name="Coulson R."/>
            <person name="Coutinho P.M."/>
            <person name="Danchin E.G.J."/>
            <person name="Diener A."/>
            <person name="Gale L.R."/>
            <person name="Gardiner D.M."/>
            <person name="Goff S."/>
            <person name="Hammond-Kosack K.E."/>
            <person name="Hilburn K."/>
            <person name="Hua-Van A."/>
            <person name="Jonkers W."/>
            <person name="Kazan K."/>
            <person name="Kodira C.D."/>
            <person name="Koehrsen M."/>
            <person name="Kumar L."/>
            <person name="Lee Y.-H."/>
            <person name="Li L."/>
            <person name="Manners J.M."/>
            <person name="Miranda-Saavedra D."/>
            <person name="Mukherjee M."/>
            <person name="Park G."/>
            <person name="Park J."/>
            <person name="Park S.-Y."/>
            <person name="Proctor R.H."/>
            <person name="Regev A."/>
            <person name="Ruiz-Roldan M.C."/>
            <person name="Sain D."/>
            <person name="Sakthikumar S."/>
            <person name="Sykes S."/>
            <person name="Schwartz D.C."/>
            <person name="Turgeon B.G."/>
            <person name="Wapinski I."/>
            <person name="Yoder O."/>
            <person name="Young S."/>
            <person name="Zeng Q."/>
            <person name="Zhou S."/>
            <person name="Galagan J."/>
            <person name="Cuomo C.A."/>
            <person name="Kistler H.C."/>
            <person name="Rep M."/>
        </authorList>
    </citation>
    <scope>GENOME REANNOTATION</scope>
    <source>
        <strain>ATCC MYA-4620 / CBS 123657 / FGSC 9075 / NRRL 31084 / PH-1</strain>
    </source>
</reference>
<reference key="3">
    <citation type="journal article" date="2015" name="BMC Genomics">
        <title>The completed genome sequence of the pathogenic ascomycete fungus Fusarium graminearum.</title>
        <authorList>
            <person name="King R."/>
            <person name="Urban M."/>
            <person name="Hammond-Kosack M.C.U."/>
            <person name="Hassani-Pak K."/>
            <person name="Hammond-Kosack K.E."/>
        </authorList>
    </citation>
    <scope>NUCLEOTIDE SEQUENCE [LARGE SCALE GENOMIC DNA]</scope>
    <source>
        <strain>ATCC MYA-4620 / CBS 123657 / FGSC 9075 / NRRL 31084 / PH-1</strain>
    </source>
</reference>
<comment type="function">
    <text evidence="2">Required for the assembly of cytochrome c oxidase.</text>
</comment>
<comment type="subcellular location">
    <subcellularLocation>
        <location evidence="1">Mitochondrion intermembrane space</location>
    </subcellularLocation>
</comment>
<comment type="similarity">
    <text evidence="6">Belongs to the COX23 family.</text>
</comment>
<accession>Q4IAJ1</accession>
<accession>A0A0E0SHD2</accession>
<dbReference type="EMBL" id="DS231665">
    <property type="status" value="NOT_ANNOTATED_CDS"/>
    <property type="molecule type" value="Genomic_DNA"/>
</dbReference>
<dbReference type="EMBL" id="HG970334">
    <property type="protein sequence ID" value="CEF85845.1"/>
    <property type="molecule type" value="Genomic_DNA"/>
</dbReference>
<dbReference type="SMR" id="Q4IAJ1"/>
<dbReference type="FunCoup" id="Q4IAJ1">
    <property type="interactions" value="6"/>
</dbReference>
<dbReference type="STRING" id="229533.Q4IAJ1"/>
<dbReference type="VEuPathDB" id="FungiDB:FGRAMPH1_01G18715"/>
<dbReference type="InParanoid" id="Q4IAJ1"/>
<dbReference type="Proteomes" id="UP000070720">
    <property type="component" value="Chromosome 3"/>
</dbReference>
<dbReference type="GO" id="GO:0005758">
    <property type="term" value="C:mitochondrial intermembrane space"/>
    <property type="evidence" value="ECO:0007669"/>
    <property type="project" value="UniProtKB-SubCell"/>
</dbReference>
<dbReference type="GO" id="GO:0033108">
    <property type="term" value="P:mitochondrial respiratory chain complex assembly"/>
    <property type="evidence" value="ECO:0007669"/>
    <property type="project" value="TreeGrafter"/>
</dbReference>
<dbReference type="Gene3D" id="1.10.287.1130">
    <property type="entry name" value="CytochromE C oxidase copper chaperone"/>
    <property type="match status" value="1"/>
</dbReference>
<dbReference type="InterPro" id="IPR051040">
    <property type="entry name" value="COX23"/>
</dbReference>
<dbReference type="InterPro" id="IPR009069">
    <property type="entry name" value="Cys_alpha_HP_mot_SF"/>
</dbReference>
<dbReference type="PANTHER" id="PTHR46811">
    <property type="entry name" value="COILED-COIL-HELIX-COILED-COIL-HELIX DOMAIN-CONTAINING PROTEIN 7"/>
    <property type="match status" value="1"/>
</dbReference>
<dbReference type="PANTHER" id="PTHR46811:SF1">
    <property type="entry name" value="COILED-COIL-HELIX-COILED-COIL-HELIX DOMAIN-CONTAINING PROTEIN 7"/>
    <property type="match status" value="1"/>
</dbReference>
<dbReference type="SUPFAM" id="SSF47072">
    <property type="entry name" value="Cysteine alpha-hairpin motif"/>
    <property type="match status" value="1"/>
</dbReference>
<dbReference type="PROSITE" id="PS51808">
    <property type="entry name" value="CHCH"/>
    <property type="match status" value="1"/>
</dbReference>